<evidence type="ECO:0000250" key="1"/>
<evidence type="ECO:0000305" key="2"/>
<comment type="function">
    <text evidence="1">Binds to 23S rRNA.</text>
</comment>
<comment type="subunit">
    <text evidence="1">Part of the 50S ribosomal subunit.</text>
</comment>
<comment type="subcellular location">
    <subcellularLocation>
        <location>Plastid</location>
        <location>Chloroplast</location>
    </subcellularLocation>
</comment>
<comment type="similarity">
    <text evidence="2">Belongs to the universal ribosomal protein uL23 family.</text>
</comment>
<proteinExistence type="evidence at protein level"/>
<name>RK23_TOBAC</name>
<dbReference type="EMBL" id="Z00044">
    <property type="protein sequence ID" value="CAA77385.1"/>
    <property type="molecule type" value="Genomic_DNA"/>
</dbReference>
<dbReference type="EMBL" id="Z00044">
    <property type="protein sequence ID" value="CAA77408.1"/>
    <property type="molecule type" value="Genomic_DNA"/>
</dbReference>
<dbReference type="PIR" id="A02817">
    <property type="entry name" value="R5NT23"/>
</dbReference>
<dbReference type="SMR" id="P06391"/>
<dbReference type="KEGG" id="nta:800421"/>
<dbReference type="KEGG" id="nta:800478"/>
<dbReference type="OMA" id="VRPIMGH"/>
<dbReference type="OrthoDB" id="1245557at2759"/>
<dbReference type="Proteomes" id="UP000084051">
    <property type="component" value="Unplaced"/>
</dbReference>
<dbReference type="GO" id="GO:0009507">
    <property type="term" value="C:chloroplast"/>
    <property type="evidence" value="ECO:0007669"/>
    <property type="project" value="UniProtKB-SubCell"/>
</dbReference>
<dbReference type="GO" id="GO:1990904">
    <property type="term" value="C:ribonucleoprotein complex"/>
    <property type="evidence" value="ECO:0007669"/>
    <property type="project" value="UniProtKB-KW"/>
</dbReference>
<dbReference type="GO" id="GO:0005840">
    <property type="term" value="C:ribosome"/>
    <property type="evidence" value="ECO:0007669"/>
    <property type="project" value="UniProtKB-KW"/>
</dbReference>
<dbReference type="GO" id="GO:0003729">
    <property type="term" value="F:mRNA binding"/>
    <property type="evidence" value="ECO:0007669"/>
    <property type="project" value="UniProtKB-ARBA"/>
</dbReference>
<dbReference type="GO" id="GO:0019843">
    <property type="term" value="F:rRNA binding"/>
    <property type="evidence" value="ECO:0007669"/>
    <property type="project" value="UniProtKB-UniRule"/>
</dbReference>
<dbReference type="GO" id="GO:0003735">
    <property type="term" value="F:structural constituent of ribosome"/>
    <property type="evidence" value="ECO:0007669"/>
    <property type="project" value="InterPro"/>
</dbReference>
<dbReference type="GO" id="GO:0006412">
    <property type="term" value="P:translation"/>
    <property type="evidence" value="ECO:0007669"/>
    <property type="project" value="UniProtKB-UniRule"/>
</dbReference>
<dbReference type="FunFam" id="3.30.70.330:FF:000002">
    <property type="entry name" value="50S ribosomal protein L23, chloroplastic"/>
    <property type="match status" value="1"/>
</dbReference>
<dbReference type="Gene3D" id="3.30.70.330">
    <property type="match status" value="1"/>
</dbReference>
<dbReference type="HAMAP" id="MF_01369_B">
    <property type="entry name" value="Ribosomal_uL23_B"/>
    <property type="match status" value="1"/>
</dbReference>
<dbReference type="InterPro" id="IPR012677">
    <property type="entry name" value="Nucleotide-bd_a/b_plait_sf"/>
</dbReference>
<dbReference type="InterPro" id="IPR013025">
    <property type="entry name" value="Ribosomal_uL23-like"/>
</dbReference>
<dbReference type="InterPro" id="IPR012678">
    <property type="entry name" value="Ribosomal_uL23/eL15/eS24_sf"/>
</dbReference>
<dbReference type="InterPro" id="IPR001014">
    <property type="entry name" value="Ribosomal_uL23_CS"/>
</dbReference>
<dbReference type="PANTHER" id="PTHR11620">
    <property type="entry name" value="60S RIBOSOMAL PROTEIN L23A"/>
    <property type="match status" value="1"/>
</dbReference>
<dbReference type="Pfam" id="PF00276">
    <property type="entry name" value="Ribosomal_L23"/>
    <property type="match status" value="1"/>
</dbReference>
<dbReference type="SUPFAM" id="SSF54189">
    <property type="entry name" value="Ribosomal proteins S24e, L23 and L15e"/>
    <property type="match status" value="1"/>
</dbReference>
<dbReference type="PROSITE" id="PS00050">
    <property type="entry name" value="RIBOSOMAL_L23"/>
    <property type="match status" value="1"/>
</dbReference>
<geneLocation type="chloroplast"/>
<protein>
    <recommendedName>
        <fullName evidence="2">Large ribosomal subunit protein uL23cz/uL23cy</fullName>
    </recommendedName>
    <alternativeName>
        <fullName>50S ribosomal protein L23, chloroplastic</fullName>
    </alternativeName>
</protein>
<keyword id="KW-0150">Chloroplast</keyword>
<keyword id="KW-0903">Direct protein sequencing</keyword>
<keyword id="KW-0934">Plastid</keyword>
<keyword id="KW-1185">Reference proteome</keyword>
<keyword id="KW-0687">Ribonucleoprotein</keyword>
<keyword id="KW-0689">Ribosomal protein</keyword>
<keyword id="KW-0694">RNA-binding</keyword>
<keyword id="KW-0699">rRNA-binding</keyword>
<accession>P06391</accession>
<feature type="chain" id="PRO_0000129465" description="Large ribosomal subunit protein uL23cz/uL23cy">
    <location>
        <begin position="1"/>
        <end position="93"/>
    </location>
</feature>
<gene>
    <name type="primary">rpl23-A</name>
</gene>
<gene>
    <name type="primary">rpl23-B</name>
</gene>
<organism>
    <name type="scientific">Nicotiana tabacum</name>
    <name type="common">Common tobacco</name>
    <dbReference type="NCBI Taxonomy" id="4097"/>
    <lineage>
        <taxon>Eukaryota</taxon>
        <taxon>Viridiplantae</taxon>
        <taxon>Streptophyta</taxon>
        <taxon>Embryophyta</taxon>
        <taxon>Tracheophyta</taxon>
        <taxon>Spermatophyta</taxon>
        <taxon>Magnoliopsida</taxon>
        <taxon>eudicotyledons</taxon>
        <taxon>Gunneridae</taxon>
        <taxon>Pentapetalae</taxon>
        <taxon>asterids</taxon>
        <taxon>lamiids</taxon>
        <taxon>Solanales</taxon>
        <taxon>Solanaceae</taxon>
        <taxon>Nicotianoideae</taxon>
        <taxon>Nicotianeae</taxon>
        <taxon>Nicotiana</taxon>
    </lineage>
</organism>
<reference key="1">
    <citation type="journal article" date="1986" name="Proc. Natl. Acad. Sci. U.S.A.">
        <title>Genes for the eight ribosomal proteins are clustered on the chloroplast genome of tobacco (Nicotiana tabacum): similarity to the S10 and spc operons of Escherichia coli.</title>
        <authorList>
            <person name="Tanaka M."/>
            <person name="Wakasugi T."/>
            <person name="Sugita M."/>
            <person name="Shinozaki K."/>
            <person name="Sugiura M."/>
        </authorList>
    </citation>
    <scope>NUCLEOTIDE SEQUENCE [GENOMIC DNA]</scope>
</reference>
<reference key="2">
    <citation type="journal article" date="1986" name="EMBO J.">
        <title>The complete nucleotide sequence of the tobacco chloroplast genome: its gene organization and expression.</title>
        <authorList>
            <person name="Shinozaki K."/>
            <person name="Ohme M."/>
            <person name="Tanaka M."/>
            <person name="Wakasugi T."/>
            <person name="Hayashida N."/>
            <person name="Matsubayashi T."/>
            <person name="Zaita N."/>
            <person name="Chunwongse J."/>
            <person name="Obokata J."/>
            <person name="Yamaguchi-Shinozaki K."/>
            <person name="Ohto C."/>
            <person name="Torazawa K."/>
            <person name="Meng B.-Y."/>
            <person name="Sugita M."/>
            <person name="Deno H."/>
            <person name="Kamogashira T."/>
            <person name="Yamada K."/>
            <person name="Kusuda J."/>
            <person name="Takaiwa F."/>
            <person name="Kato A."/>
            <person name="Tohdoh N."/>
            <person name="Shimada H."/>
            <person name="Sugiura M."/>
        </authorList>
    </citation>
    <scope>NUCLEOTIDE SEQUENCE [LARGE SCALE GENOMIC DNA]</scope>
    <source>
        <strain>cv. Bright Yellow 4</strain>
    </source>
</reference>
<reference key="3">
    <citation type="journal article" date="1991" name="FEBS Lett.">
        <title>The chloroplast gene for ribosomal protein CL23 is functional in tobacco.</title>
        <authorList>
            <person name="Yokoi F."/>
            <person name="Tanaka M."/>
            <person name="Wakasugi T."/>
            <person name="Sugiura M."/>
        </authorList>
    </citation>
    <scope>PROTEIN SEQUENCE OF 1-20</scope>
    <source>
        <strain>cv. Bright Yellow 4</strain>
    </source>
</reference>
<sequence>MDGIKYAVFTDKSIRLLGKNQYTSNVESGSTRTEIKHWVELFFGVKVIAMNSHRLPGKSRRMGPIMGHTMHYRRMIITLQPGYSIPPLRKKRT</sequence>